<dbReference type="EC" id="2.1.1.74" evidence="1"/>
<dbReference type="EMBL" id="AL766848">
    <property type="protein sequence ID" value="CAD46614.1"/>
    <property type="molecule type" value="Genomic_DNA"/>
</dbReference>
<dbReference type="RefSeq" id="WP_000083753.1">
    <property type="nucleotide sequence ID" value="NC_004368.1"/>
</dbReference>
<dbReference type="SMR" id="Q8E5M6"/>
<dbReference type="KEGG" id="san:gbs0955"/>
<dbReference type="eggNOG" id="COG1206">
    <property type="taxonomic scope" value="Bacteria"/>
</dbReference>
<dbReference type="HOGENOM" id="CLU_033057_1_0_9"/>
<dbReference type="Proteomes" id="UP000000823">
    <property type="component" value="Chromosome"/>
</dbReference>
<dbReference type="GO" id="GO:0005829">
    <property type="term" value="C:cytosol"/>
    <property type="evidence" value="ECO:0007669"/>
    <property type="project" value="TreeGrafter"/>
</dbReference>
<dbReference type="GO" id="GO:0050660">
    <property type="term" value="F:flavin adenine dinucleotide binding"/>
    <property type="evidence" value="ECO:0007669"/>
    <property type="project" value="UniProtKB-UniRule"/>
</dbReference>
<dbReference type="GO" id="GO:0047151">
    <property type="term" value="F:tRNA (uracil(54)-C5)-methyltransferase activity, 5,10-methylenetetrahydrofolate-dependent"/>
    <property type="evidence" value="ECO:0007669"/>
    <property type="project" value="UniProtKB-UniRule"/>
</dbReference>
<dbReference type="GO" id="GO:0030488">
    <property type="term" value="P:tRNA methylation"/>
    <property type="evidence" value="ECO:0007669"/>
    <property type="project" value="TreeGrafter"/>
</dbReference>
<dbReference type="GO" id="GO:0002098">
    <property type="term" value="P:tRNA wobble uridine modification"/>
    <property type="evidence" value="ECO:0007669"/>
    <property type="project" value="TreeGrafter"/>
</dbReference>
<dbReference type="FunFam" id="3.50.50.60:FF:000035">
    <property type="entry name" value="Methylenetetrahydrofolate--tRNA-(uracil-5-)-methyltransferase TrmFO"/>
    <property type="match status" value="1"/>
</dbReference>
<dbReference type="FunFam" id="3.50.50.60:FF:000040">
    <property type="entry name" value="Methylenetetrahydrofolate--tRNA-(uracil-5-)-methyltransferase TrmFO"/>
    <property type="match status" value="1"/>
</dbReference>
<dbReference type="Gene3D" id="3.50.50.60">
    <property type="entry name" value="FAD/NAD(P)-binding domain"/>
    <property type="match status" value="2"/>
</dbReference>
<dbReference type="HAMAP" id="MF_01037">
    <property type="entry name" value="TrmFO"/>
    <property type="match status" value="1"/>
</dbReference>
<dbReference type="InterPro" id="IPR036188">
    <property type="entry name" value="FAD/NAD-bd_sf"/>
</dbReference>
<dbReference type="InterPro" id="IPR002218">
    <property type="entry name" value="MnmG-rel"/>
</dbReference>
<dbReference type="InterPro" id="IPR020595">
    <property type="entry name" value="MnmG-rel_CS"/>
</dbReference>
<dbReference type="InterPro" id="IPR040131">
    <property type="entry name" value="MnmG_N"/>
</dbReference>
<dbReference type="InterPro" id="IPR004417">
    <property type="entry name" value="TrmFO"/>
</dbReference>
<dbReference type="NCBIfam" id="TIGR00137">
    <property type="entry name" value="gid_trmFO"/>
    <property type="match status" value="1"/>
</dbReference>
<dbReference type="NCBIfam" id="NF003739">
    <property type="entry name" value="PRK05335.1"/>
    <property type="match status" value="1"/>
</dbReference>
<dbReference type="PANTHER" id="PTHR11806">
    <property type="entry name" value="GLUCOSE INHIBITED DIVISION PROTEIN A"/>
    <property type="match status" value="1"/>
</dbReference>
<dbReference type="PANTHER" id="PTHR11806:SF2">
    <property type="entry name" value="METHYLENETETRAHYDROFOLATE--TRNA-(URACIL-5-)-METHYLTRANSFERASE TRMFO"/>
    <property type="match status" value="1"/>
</dbReference>
<dbReference type="Pfam" id="PF01134">
    <property type="entry name" value="GIDA"/>
    <property type="match status" value="1"/>
</dbReference>
<dbReference type="SUPFAM" id="SSF51905">
    <property type="entry name" value="FAD/NAD(P)-binding domain"/>
    <property type="match status" value="1"/>
</dbReference>
<dbReference type="PROSITE" id="PS01281">
    <property type="entry name" value="GIDA_2"/>
    <property type="match status" value="1"/>
</dbReference>
<gene>
    <name evidence="1" type="primary">trmFO</name>
    <name type="synonym">gid</name>
    <name type="ordered locus">gbs0955</name>
</gene>
<proteinExistence type="inferred from homology"/>
<evidence type="ECO:0000255" key="1">
    <source>
        <dbReference type="HAMAP-Rule" id="MF_01037"/>
    </source>
</evidence>
<comment type="function">
    <text evidence="1">Catalyzes the folate-dependent formation of 5-methyl-uridine at position 54 (M-5-U54) in all tRNAs.</text>
</comment>
<comment type="catalytic activity">
    <reaction evidence="1">
        <text>uridine(54) in tRNA + (6R)-5,10-methylene-5,6,7,8-tetrahydrofolate + NADH + H(+) = 5-methyluridine(54) in tRNA + (6S)-5,6,7,8-tetrahydrofolate + NAD(+)</text>
        <dbReference type="Rhea" id="RHEA:16873"/>
        <dbReference type="Rhea" id="RHEA-COMP:10167"/>
        <dbReference type="Rhea" id="RHEA-COMP:10193"/>
        <dbReference type="ChEBI" id="CHEBI:15378"/>
        <dbReference type="ChEBI" id="CHEBI:15636"/>
        <dbReference type="ChEBI" id="CHEBI:57453"/>
        <dbReference type="ChEBI" id="CHEBI:57540"/>
        <dbReference type="ChEBI" id="CHEBI:57945"/>
        <dbReference type="ChEBI" id="CHEBI:65315"/>
        <dbReference type="ChEBI" id="CHEBI:74447"/>
        <dbReference type="EC" id="2.1.1.74"/>
    </reaction>
</comment>
<comment type="catalytic activity">
    <reaction evidence="1">
        <text>uridine(54) in tRNA + (6R)-5,10-methylene-5,6,7,8-tetrahydrofolate + NADPH + H(+) = 5-methyluridine(54) in tRNA + (6S)-5,6,7,8-tetrahydrofolate + NADP(+)</text>
        <dbReference type="Rhea" id="RHEA:62372"/>
        <dbReference type="Rhea" id="RHEA-COMP:10167"/>
        <dbReference type="Rhea" id="RHEA-COMP:10193"/>
        <dbReference type="ChEBI" id="CHEBI:15378"/>
        <dbReference type="ChEBI" id="CHEBI:15636"/>
        <dbReference type="ChEBI" id="CHEBI:57453"/>
        <dbReference type="ChEBI" id="CHEBI:57783"/>
        <dbReference type="ChEBI" id="CHEBI:58349"/>
        <dbReference type="ChEBI" id="CHEBI:65315"/>
        <dbReference type="ChEBI" id="CHEBI:74447"/>
        <dbReference type="EC" id="2.1.1.74"/>
    </reaction>
</comment>
<comment type="cofactor">
    <cofactor evidence="1">
        <name>FAD</name>
        <dbReference type="ChEBI" id="CHEBI:57692"/>
    </cofactor>
</comment>
<comment type="subcellular location">
    <subcellularLocation>
        <location evidence="1">Cytoplasm</location>
    </subcellularLocation>
</comment>
<comment type="similarity">
    <text evidence="1">Belongs to the MnmG family. TrmFO subfamily.</text>
</comment>
<sequence length="444" mass="49502">MSQSYINVIGAGLAGSEAAYQIAKRGIPVKLYEMRGVKSTPQHKTDNFAELVCSNSFRGDSLTNAVGLLKEEMRRLDSIIMRNGEAHRVPAGGAMAVDREGYSEAVTEEIHKHPLIEVIRDEITDIPGDAITVIATGPLTSDSLAAKIHELNGGDGFYFYDAAAPIVDKNTIDMNKVYLKSRYDKGEAAYLNCPMTKEEFMAFHEALTTAEEAPLNSFEKEKYFEGCMPIEVMAKRGIKTMLYGPMKPVGLEYPEDYKGPRDGEFKTPYAVVQLRQDNAAGSLYNIVGFQTHLKWGEQKRVFQMIPGLENAEFVRYGVMHRNSYMDSPNLLDQTFATRKNPNLFFAGQMTGVEGYVESAASGLVAGINAARRFNGESEVVFPQTTAIGALPHYITHTDSKHFQPMNVNFGIIKELEGPRIRDKKERYEAIATRALKDLEKFLNY</sequence>
<accession>Q8E5M6</accession>
<organism>
    <name type="scientific">Streptococcus agalactiae serotype III (strain NEM316)</name>
    <dbReference type="NCBI Taxonomy" id="211110"/>
    <lineage>
        <taxon>Bacteria</taxon>
        <taxon>Bacillati</taxon>
        <taxon>Bacillota</taxon>
        <taxon>Bacilli</taxon>
        <taxon>Lactobacillales</taxon>
        <taxon>Streptococcaceae</taxon>
        <taxon>Streptococcus</taxon>
    </lineage>
</organism>
<protein>
    <recommendedName>
        <fullName evidence="1">Methylenetetrahydrofolate--tRNA-(uracil-5-)-methyltransferase TrmFO</fullName>
        <ecNumber evidence="1">2.1.1.74</ecNumber>
    </recommendedName>
    <alternativeName>
        <fullName evidence="1">Folate-dependent tRNA (uracil-5-)-methyltransferase</fullName>
    </alternativeName>
    <alternativeName>
        <fullName evidence="1">Folate-dependent tRNA(M-5-U54)-methyltransferase</fullName>
    </alternativeName>
</protein>
<name>TRMFO_STRA3</name>
<reference key="1">
    <citation type="journal article" date="2002" name="Mol. Microbiol.">
        <title>Genome sequence of Streptococcus agalactiae, a pathogen causing invasive neonatal disease.</title>
        <authorList>
            <person name="Glaser P."/>
            <person name="Rusniok C."/>
            <person name="Buchrieser C."/>
            <person name="Chevalier F."/>
            <person name="Frangeul L."/>
            <person name="Msadek T."/>
            <person name="Zouine M."/>
            <person name="Couve E."/>
            <person name="Lalioui L."/>
            <person name="Poyart C."/>
            <person name="Trieu-Cuot P."/>
            <person name="Kunst F."/>
        </authorList>
    </citation>
    <scope>NUCLEOTIDE SEQUENCE [LARGE SCALE GENOMIC DNA]</scope>
    <source>
        <strain>NEM316</strain>
    </source>
</reference>
<keyword id="KW-0963">Cytoplasm</keyword>
<keyword id="KW-0274">FAD</keyword>
<keyword id="KW-0285">Flavoprotein</keyword>
<keyword id="KW-0489">Methyltransferase</keyword>
<keyword id="KW-0520">NAD</keyword>
<keyword id="KW-0521">NADP</keyword>
<keyword id="KW-0808">Transferase</keyword>
<keyword id="KW-0819">tRNA processing</keyword>
<feature type="chain" id="PRO_0000117269" description="Methylenetetrahydrofolate--tRNA-(uracil-5-)-methyltransferase TrmFO">
    <location>
        <begin position="1"/>
        <end position="444"/>
    </location>
</feature>
<feature type="binding site" evidence="1">
    <location>
        <begin position="10"/>
        <end position="15"/>
    </location>
    <ligand>
        <name>FAD</name>
        <dbReference type="ChEBI" id="CHEBI:57692"/>
    </ligand>
</feature>